<dbReference type="EC" id="2.4.2.10" evidence="1"/>
<dbReference type="EMBL" id="CP000872">
    <property type="protein sequence ID" value="ABX61740.1"/>
    <property type="molecule type" value="Genomic_DNA"/>
</dbReference>
<dbReference type="RefSeq" id="WP_004691929.1">
    <property type="nucleotide sequence ID" value="NC_010103.1"/>
</dbReference>
<dbReference type="SMR" id="A9MA28"/>
<dbReference type="GeneID" id="55590379"/>
<dbReference type="KEGG" id="bcs:BCAN_A0666"/>
<dbReference type="HOGENOM" id="CLU_074878_3_0_5"/>
<dbReference type="PhylomeDB" id="A9MA28"/>
<dbReference type="UniPathway" id="UPA00070">
    <property type="reaction ID" value="UER00119"/>
</dbReference>
<dbReference type="Proteomes" id="UP000001385">
    <property type="component" value="Chromosome I"/>
</dbReference>
<dbReference type="GO" id="GO:0000287">
    <property type="term" value="F:magnesium ion binding"/>
    <property type="evidence" value="ECO:0007669"/>
    <property type="project" value="UniProtKB-UniRule"/>
</dbReference>
<dbReference type="GO" id="GO:0004588">
    <property type="term" value="F:orotate phosphoribosyltransferase activity"/>
    <property type="evidence" value="ECO:0007669"/>
    <property type="project" value="UniProtKB-UniRule"/>
</dbReference>
<dbReference type="GO" id="GO:0044205">
    <property type="term" value="P:'de novo' UMP biosynthetic process"/>
    <property type="evidence" value="ECO:0007669"/>
    <property type="project" value="UniProtKB-UniRule"/>
</dbReference>
<dbReference type="GO" id="GO:0019856">
    <property type="term" value="P:pyrimidine nucleobase biosynthetic process"/>
    <property type="evidence" value="ECO:0007669"/>
    <property type="project" value="InterPro"/>
</dbReference>
<dbReference type="CDD" id="cd06223">
    <property type="entry name" value="PRTases_typeI"/>
    <property type="match status" value="1"/>
</dbReference>
<dbReference type="Gene3D" id="3.40.50.2020">
    <property type="match status" value="1"/>
</dbReference>
<dbReference type="HAMAP" id="MF_01208">
    <property type="entry name" value="PyrE"/>
    <property type="match status" value="1"/>
</dbReference>
<dbReference type="InterPro" id="IPR023031">
    <property type="entry name" value="OPRT"/>
</dbReference>
<dbReference type="InterPro" id="IPR006273">
    <property type="entry name" value="Orotate_PRibTrfase_bac"/>
</dbReference>
<dbReference type="InterPro" id="IPR000836">
    <property type="entry name" value="PRibTrfase_dom"/>
</dbReference>
<dbReference type="InterPro" id="IPR029057">
    <property type="entry name" value="PRTase-like"/>
</dbReference>
<dbReference type="NCBIfam" id="TIGR01367">
    <property type="entry name" value="pyrE_Therm"/>
    <property type="match status" value="1"/>
</dbReference>
<dbReference type="PANTHER" id="PTHR19278">
    <property type="entry name" value="OROTATE PHOSPHORIBOSYLTRANSFERASE"/>
    <property type="match status" value="1"/>
</dbReference>
<dbReference type="PANTHER" id="PTHR19278:SF9">
    <property type="entry name" value="URIDINE 5'-MONOPHOSPHATE SYNTHASE"/>
    <property type="match status" value="1"/>
</dbReference>
<dbReference type="Pfam" id="PF00156">
    <property type="entry name" value="Pribosyltran"/>
    <property type="match status" value="1"/>
</dbReference>
<dbReference type="SUPFAM" id="SSF53271">
    <property type="entry name" value="PRTase-like"/>
    <property type="match status" value="1"/>
</dbReference>
<dbReference type="PROSITE" id="PS00103">
    <property type="entry name" value="PUR_PYR_PR_TRANSFER"/>
    <property type="match status" value="1"/>
</dbReference>
<sequence>MNTDDVLAVFREAGAILEGHFILTSGLRSPVFLQKARVFMHADKTEKLCKALAEKIRAADLGPIDYVVGPAIGGLIPSYETSRHLGVPSVWVERENGVFRLRRFDVPKGARVVIVEDIVTTGLSIRETIDCMKDLGIEVVAAACIVDRSAGKADVGTRLISLAAYEVPAYPADKLPPELAAIPAVKPGSRNI</sequence>
<organism>
    <name type="scientific">Brucella canis (strain ATCC 23365 / NCTC 10854 / RM-666)</name>
    <dbReference type="NCBI Taxonomy" id="483179"/>
    <lineage>
        <taxon>Bacteria</taxon>
        <taxon>Pseudomonadati</taxon>
        <taxon>Pseudomonadota</taxon>
        <taxon>Alphaproteobacteria</taxon>
        <taxon>Hyphomicrobiales</taxon>
        <taxon>Brucellaceae</taxon>
        <taxon>Brucella/Ochrobactrum group</taxon>
        <taxon>Brucella</taxon>
    </lineage>
</organism>
<gene>
    <name evidence="1" type="primary">pyrE</name>
    <name type="ordered locus">BCAN_A0666</name>
</gene>
<keyword id="KW-0328">Glycosyltransferase</keyword>
<keyword id="KW-0460">Magnesium</keyword>
<keyword id="KW-0665">Pyrimidine biosynthesis</keyword>
<keyword id="KW-1185">Reference proteome</keyword>
<keyword id="KW-0808">Transferase</keyword>
<reference key="1">
    <citation type="submission" date="2007-10" db="EMBL/GenBank/DDBJ databases">
        <title>Brucella canis ATCC 23365 whole genome shotgun sequencing project.</title>
        <authorList>
            <person name="Setubal J.C."/>
            <person name="Bowns C."/>
            <person name="Boyle S."/>
            <person name="Crasta O.R."/>
            <person name="Czar M.J."/>
            <person name="Dharmanolla C."/>
            <person name="Gillespie J.J."/>
            <person name="Kenyon R.W."/>
            <person name="Lu J."/>
            <person name="Mane S."/>
            <person name="Mohapatra S."/>
            <person name="Nagrani S."/>
            <person name="Purkayastha A."/>
            <person name="Rajasimha H.K."/>
            <person name="Shallom J.M."/>
            <person name="Shallom S."/>
            <person name="Shukla M."/>
            <person name="Snyder E.E."/>
            <person name="Sobral B.W."/>
            <person name="Wattam A.R."/>
            <person name="Will R."/>
            <person name="Williams K."/>
            <person name="Yoo H."/>
            <person name="Bruce D."/>
            <person name="Detter C."/>
            <person name="Munk C."/>
            <person name="Brettin T.S."/>
        </authorList>
    </citation>
    <scope>NUCLEOTIDE SEQUENCE [LARGE SCALE GENOMIC DNA]</scope>
    <source>
        <strain>ATCC 23365 / NCTC 10854 / RM-666</strain>
    </source>
</reference>
<accession>A9MA28</accession>
<proteinExistence type="inferred from homology"/>
<name>PYRE_BRUC2</name>
<evidence type="ECO:0000255" key="1">
    <source>
        <dbReference type="HAMAP-Rule" id="MF_01208"/>
    </source>
</evidence>
<feature type="chain" id="PRO_1000085539" description="Orotate phosphoribosyltransferase">
    <location>
        <begin position="1"/>
        <end position="192"/>
    </location>
</feature>
<feature type="binding site" evidence="1">
    <location>
        <begin position="116"/>
        <end position="124"/>
    </location>
    <ligand>
        <name>5-phospho-alpha-D-ribose 1-diphosphate</name>
        <dbReference type="ChEBI" id="CHEBI:58017"/>
    </ligand>
</feature>
<feature type="binding site" evidence="1">
    <location>
        <position position="120"/>
    </location>
    <ligand>
        <name>orotate</name>
        <dbReference type="ChEBI" id="CHEBI:30839"/>
    </ligand>
</feature>
<feature type="binding site" evidence="1">
    <location>
        <position position="148"/>
    </location>
    <ligand>
        <name>orotate</name>
        <dbReference type="ChEBI" id="CHEBI:30839"/>
    </ligand>
</feature>
<comment type="function">
    <text evidence="1">Catalyzes the transfer of a ribosyl phosphate group from 5-phosphoribose 1-diphosphate to orotate, leading to the formation of orotidine monophosphate (OMP).</text>
</comment>
<comment type="catalytic activity">
    <reaction evidence="1">
        <text>orotidine 5'-phosphate + diphosphate = orotate + 5-phospho-alpha-D-ribose 1-diphosphate</text>
        <dbReference type="Rhea" id="RHEA:10380"/>
        <dbReference type="ChEBI" id="CHEBI:30839"/>
        <dbReference type="ChEBI" id="CHEBI:33019"/>
        <dbReference type="ChEBI" id="CHEBI:57538"/>
        <dbReference type="ChEBI" id="CHEBI:58017"/>
        <dbReference type="EC" id="2.4.2.10"/>
    </reaction>
</comment>
<comment type="cofactor">
    <cofactor evidence="1">
        <name>Mg(2+)</name>
        <dbReference type="ChEBI" id="CHEBI:18420"/>
    </cofactor>
</comment>
<comment type="pathway">
    <text evidence="1">Pyrimidine metabolism; UMP biosynthesis via de novo pathway; UMP from orotate: step 1/2.</text>
</comment>
<comment type="subunit">
    <text evidence="1">Homodimer.</text>
</comment>
<comment type="similarity">
    <text evidence="1">Belongs to the purine/pyrimidine phosphoribosyltransferase family. PyrE subfamily.</text>
</comment>
<protein>
    <recommendedName>
        <fullName evidence="1">Orotate phosphoribosyltransferase</fullName>
        <shortName evidence="1">OPRT</shortName>
        <shortName evidence="1">OPRTase</shortName>
        <ecNumber evidence="1">2.4.2.10</ecNumber>
    </recommendedName>
</protein>